<protein>
    <recommendedName>
        <fullName evidence="1">Large ribosomal subunit protein bL33</fullName>
    </recommendedName>
    <alternativeName>
        <fullName evidence="2">50S ribosomal protein L33</fullName>
    </alternativeName>
</protein>
<comment type="similarity">
    <text evidence="1">Belongs to the bacterial ribosomal protein bL33 family.</text>
</comment>
<keyword id="KW-0687">Ribonucleoprotein</keyword>
<keyword id="KW-0689">Ribosomal protein</keyword>
<reference key="1">
    <citation type="journal article" date="2005" name="Proc. Natl. Acad. Sci. U.S.A.">
        <title>Complete genome sequencing of Anaplasma marginale reveals that the surface is skewed to two superfamilies of outer membrane proteins.</title>
        <authorList>
            <person name="Brayton K.A."/>
            <person name="Kappmeyer L.S."/>
            <person name="Herndon D.R."/>
            <person name="Dark M.J."/>
            <person name="Tibbals D.L."/>
            <person name="Palmer G.H."/>
            <person name="McGuire T.C."/>
            <person name="Knowles D.P. Jr."/>
        </authorList>
    </citation>
    <scope>NUCLEOTIDE SEQUENCE [LARGE SCALE GENOMIC DNA]</scope>
    <source>
        <strain>St. Maries</strain>
    </source>
</reference>
<proteinExistence type="inferred from homology"/>
<accession>Q5PBA7</accession>
<sequence>MAKKGSGLLVKLVSSEGTGYFYVKKRDPKKLVEKLSFRKYDPVARKHVLFKEEKLR</sequence>
<dbReference type="EMBL" id="CP000030">
    <property type="protein sequence ID" value="AAV86422.1"/>
    <property type="molecule type" value="Genomic_DNA"/>
</dbReference>
<dbReference type="RefSeq" id="WP_010263289.1">
    <property type="nucleotide sequence ID" value="NZ_AFMU01000023.1"/>
</dbReference>
<dbReference type="SMR" id="Q5PBA7"/>
<dbReference type="GeneID" id="7398366"/>
<dbReference type="KEGG" id="ama:AM340"/>
<dbReference type="PATRIC" id="fig|320483.3.peg.289"/>
<dbReference type="HOGENOM" id="CLU_190949_1_0_5"/>
<dbReference type="GO" id="GO:0005737">
    <property type="term" value="C:cytoplasm"/>
    <property type="evidence" value="ECO:0007669"/>
    <property type="project" value="UniProtKB-ARBA"/>
</dbReference>
<dbReference type="GO" id="GO:0015934">
    <property type="term" value="C:large ribosomal subunit"/>
    <property type="evidence" value="ECO:0007669"/>
    <property type="project" value="TreeGrafter"/>
</dbReference>
<dbReference type="GO" id="GO:0003735">
    <property type="term" value="F:structural constituent of ribosome"/>
    <property type="evidence" value="ECO:0007669"/>
    <property type="project" value="InterPro"/>
</dbReference>
<dbReference type="GO" id="GO:0006412">
    <property type="term" value="P:translation"/>
    <property type="evidence" value="ECO:0007669"/>
    <property type="project" value="UniProtKB-UniRule"/>
</dbReference>
<dbReference type="Gene3D" id="2.20.28.120">
    <property type="entry name" value="Ribosomal protein L33"/>
    <property type="match status" value="1"/>
</dbReference>
<dbReference type="HAMAP" id="MF_00294">
    <property type="entry name" value="Ribosomal_bL33"/>
    <property type="match status" value="1"/>
</dbReference>
<dbReference type="InterPro" id="IPR001705">
    <property type="entry name" value="Ribosomal_bL33"/>
</dbReference>
<dbReference type="InterPro" id="IPR038584">
    <property type="entry name" value="Ribosomal_bL33_sf"/>
</dbReference>
<dbReference type="InterPro" id="IPR011332">
    <property type="entry name" value="Ribosomal_zn-bd"/>
</dbReference>
<dbReference type="NCBIfam" id="NF001860">
    <property type="entry name" value="PRK00595.1"/>
    <property type="match status" value="1"/>
</dbReference>
<dbReference type="NCBIfam" id="TIGR01023">
    <property type="entry name" value="rpmG_bact"/>
    <property type="match status" value="1"/>
</dbReference>
<dbReference type="PANTHER" id="PTHR15238">
    <property type="entry name" value="54S RIBOSOMAL PROTEIN L39, MITOCHONDRIAL"/>
    <property type="match status" value="1"/>
</dbReference>
<dbReference type="PANTHER" id="PTHR15238:SF1">
    <property type="entry name" value="LARGE RIBOSOMAL SUBUNIT PROTEIN BL33M"/>
    <property type="match status" value="1"/>
</dbReference>
<dbReference type="Pfam" id="PF00471">
    <property type="entry name" value="Ribosomal_L33"/>
    <property type="match status" value="1"/>
</dbReference>
<dbReference type="SUPFAM" id="SSF57829">
    <property type="entry name" value="Zn-binding ribosomal proteins"/>
    <property type="match status" value="1"/>
</dbReference>
<organism>
    <name type="scientific">Anaplasma marginale (strain St. Maries)</name>
    <dbReference type="NCBI Taxonomy" id="234826"/>
    <lineage>
        <taxon>Bacteria</taxon>
        <taxon>Pseudomonadati</taxon>
        <taxon>Pseudomonadota</taxon>
        <taxon>Alphaproteobacteria</taxon>
        <taxon>Rickettsiales</taxon>
        <taxon>Anaplasmataceae</taxon>
        <taxon>Anaplasma</taxon>
    </lineage>
</organism>
<evidence type="ECO:0000255" key="1">
    <source>
        <dbReference type="HAMAP-Rule" id="MF_00294"/>
    </source>
</evidence>
<evidence type="ECO:0000305" key="2"/>
<name>RL33_ANAMM</name>
<gene>
    <name evidence="1" type="primary">rpmG</name>
    <name type="ordered locus">AM340</name>
</gene>
<feature type="chain" id="PRO_1000004138" description="Large ribosomal subunit protein bL33">
    <location>
        <begin position="1"/>
        <end position="56"/>
    </location>
</feature>